<sequence>MSCPVGNHNGDPQGGQRLGSEAGMLYGEYLMLDKVLSAQRMLSVESNKPVHDEHLFIVTHQAYELWFKQIIFELDSIRSLFSTEHMEESRTLEILKRLNRIVMILKLLVDQVPILETMTPLDFMDFRDFLSPASGFQSLQFRLLENKLGVKTEHRVKYNQKYSEVFASDPCAIERLSITESEPSLADLVQKWLERTPGLETNGFNFWGKFEESVEQLLADQEASAMEEEHENVKNYRLMDIEKRREVYKSIFDASVHDALVARGDRRFTHRALQGAIMITFYRDEPRFSQPHQLLMLLMDIDSLITKWRYNHVIMVQRMIGSQQLGTGGSSGYQYLRSTLSDRYKVFIDLFNLSTFLIPRGSIPPLTCEMQKALNLAWGSPVHQAKQINYAAK</sequence>
<gene>
    <name type="ORF">AAEL000428</name>
</gene>
<evidence type="ECO:0000255" key="1">
    <source>
        <dbReference type="HAMAP-Rule" id="MF_03020"/>
    </source>
</evidence>
<evidence type="ECO:0000269" key="2">
    <source>
    </source>
</evidence>
<evidence type="ECO:0000305" key="3"/>
<name>T23O_AEDAE</name>
<accession>Q17P71</accession>
<accession>Q8WSB3</accession>
<protein>
    <recommendedName>
        <fullName evidence="1">Tryptophan 2,3-dioxygenase</fullName>
        <shortName evidence="1">TDO</shortName>
        <ecNumber evidence="1">1.13.11.11</ecNumber>
    </recommendedName>
    <alternativeName>
        <fullName evidence="1">Tryptamin 2,3-dioxygenase</fullName>
    </alternativeName>
    <alternativeName>
        <fullName evidence="1">Tryptophan oxygenase</fullName>
        <shortName evidence="1">TO</shortName>
        <shortName evidence="1">TRPO</shortName>
    </alternativeName>
    <alternativeName>
        <fullName evidence="1">Tryptophan pyrrolase</fullName>
    </alternativeName>
    <alternativeName>
        <fullName evidence="1">Tryptophanase</fullName>
    </alternativeName>
</protein>
<dbReference type="EC" id="1.13.11.11" evidence="1"/>
<dbReference type="EMBL" id="AF325458">
    <property type="protein sequence ID" value="AAL37360.1"/>
    <property type="molecule type" value="mRNA"/>
</dbReference>
<dbReference type="EMBL" id="CH477193">
    <property type="protein sequence ID" value="EAT48562.1"/>
    <property type="molecule type" value="Genomic_DNA"/>
</dbReference>
<dbReference type="SMR" id="Q17P71"/>
<dbReference type="FunCoup" id="Q17P71">
    <property type="interactions" value="128"/>
</dbReference>
<dbReference type="STRING" id="7159.Q17P71"/>
<dbReference type="PaxDb" id="7159-AAEL000428-PA"/>
<dbReference type="EnsemblMetazoa" id="AAEL000428-RA">
    <property type="protein sequence ID" value="AAEL000428-PA"/>
    <property type="gene ID" value="AAEL000428"/>
</dbReference>
<dbReference type="GeneID" id="5577377"/>
<dbReference type="KEGG" id="aag:5577377"/>
<dbReference type="CTD" id="136040130"/>
<dbReference type="VEuPathDB" id="VectorBase:AAEL000428"/>
<dbReference type="eggNOG" id="KOG3906">
    <property type="taxonomic scope" value="Eukaryota"/>
</dbReference>
<dbReference type="HOGENOM" id="CLU_045599_1_1_1"/>
<dbReference type="InParanoid" id="Q17P71"/>
<dbReference type="OMA" id="WRWRNDH"/>
<dbReference type="OrthoDB" id="447477at2759"/>
<dbReference type="PhylomeDB" id="Q17P71"/>
<dbReference type="BRENDA" id="1.13.11.52">
    <property type="organism ID" value="149"/>
</dbReference>
<dbReference type="UniPathway" id="UPA00271"/>
<dbReference type="UniPathway" id="UPA00333">
    <property type="reaction ID" value="UER00453"/>
</dbReference>
<dbReference type="Proteomes" id="UP000008820">
    <property type="component" value="Chromosome 3"/>
</dbReference>
<dbReference type="Proteomes" id="UP000682892">
    <property type="component" value="Unassembled WGS sequence"/>
</dbReference>
<dbReference type="GO" id="GO:0020037">
    <property type="term" value="F:heme binding"/>
    <property type="evidence" value="ECO:0000314"/>
    <property type="project" value="UniProtKB"/>
</dbReference>
<dbReference type="GO" id="GO:0046872">
    <property type="term" value="F:metal ion binding"/>
    <property type="evidence" value="ECO:0007669"/>
    <property type="project" value="UniProtKB-KW"/>
</dbReference>
<dbReference type="GO" id="GO:0004833">
    <property type="term" value="F:tryptophan 2,3-dioxygenase activity"/>
    <property type="evidence" value="ECO:0000314"/>
    <property type="project" value="UniProtKB"/>
</dbReference>
<dbReference type="GO" id="GO:0019442">
    <property type="term" value="P:L-tryptophan catabolic process to acetyl-CoA"/>
    <property type="evidence" value="ECO:0007669"/>
    <property type="project" value="TreeGrafter"/>
</dbReference>
<dbReference type="GO" id="GO:0019441">
    <property type="term" value="P:L-tryptophan catabolic process to kynurenine"/>
    <property type="evidence" value="ECO:0000314"/>
    <property type="project" value="UniProtKB"/>
</dbReference>
<dbReference type="GO" id="GO:0006727">
    <property type="term" value="P:ommochrome biosynthetic process"/>
    <property type="evidence" value="ECO:0007669"/>
    <property type="project" value="UniProtKB-UniRule"/>
</dbReference>
<dbReference type="FunFam" id="1.10.287.3810:FF:000001">
    <property type="entry name" value="Tryptophan 2,3-dioxygenase"/>
    <property type="match status" value="1"/>
</dbReference>
<dbReference type="Gene3D" id="1.10.287.3810">
    <property type="match status" value="1"/>
</dbReference>
<dbReference type="Gene3D" id="1.20.58.480">
    <property type="match status" value="1"/>
</dbReference>
<dbReference type="HAMAP" id="MF_01972">
    <property type="entry name" value="T23O"/>
    <property type="match status" value="1"/>
</dbReference>
<dbReference type="InterPro" id="IPR037217">
    <property type="entry name" value="Trp/Indoleamine_2_3_dOase-like"/>
</dbReference>
<dbReference type="InterPro" id="IPR004981">
    <property type="entry name" value="Trp_2_3_dOase"/>
</dbReference>
<dbReference type="PANTHER" id="PTHR10138">
    <property type="entry name" value="TRYPTOPHAN 2,3-DIOXYGENASE"/>
    <property type="match status" value="1"/>
</dbReference>
<dbReference type="PANTHER" id="PTHR10138:SF0">
    <property type="entry name" value="TRYPTOPHAN 2,3-DIOXYGENASE"/>
    <property type="match status" value="1"/>
</dbReference>
<dbReference type="Pfam" id="PF03301">
    <property type="entry name" value="Trp_dioxygenase"/>
    <property type="match status" value="1"/>
</dbReference>
<dbReference type="SUPFAM" id="SSF140959">
    <property type="entry name" value="Indolic compounds 2,3-dioxygenase-like"/>
    <property type="match status" value="1"/>
</dbReference>
<reference key="1">
    <citation type="journal article" date="2007" name="Arch. Insect Biochem. Physiol.">
        <title>Biochemical mechanisms leading to tryptophan 2,3-dioxygenase activation.</title>
        <authorList>
            <person name="Li J.S."/>
            <person name="Han Q."/>
            <person name="Fang J."/>
            <person name="Rizzi M."/>
            <person name="James A.A."/>
            <person name="Li J."/>
        </authorList>
    </citation>
    <scope>NUCLEOTIDE SEQUENCE [MRNA]</scope>
    <scope>FUNCTION</scope>
    <scope>CATALYTIC ACTIVITY</scope>
    <scope>ACTIVITY REGULATION</scope>
    <scope>BIOPHYSICOCHEMICAL PROPERTIES</scope>
</reference>
<reference key="2">
    <citation type="journal article" date="2007" name="Science">
        <title>Genome sequence of Aedes aegypti, a major arbovirus vector.</title>
        <authorList>
            <person name="Nene V."/>
            <person name="Wortman J.R."/>
            <person name="Lawson D."/>
            <person name="Haas B.J."/>
            <person name="Kodira C.D."/>
            <person name="Tu Z.J."/>
            <person name="Loftus B.J."/>
            <person name="Xi Z."/>
            <person name="Megy K."/>
            <person name="Grabherr M."/>
            <person name="Ren Q."/>
            <person name="Zdobnov E.M."/>
            <person name="Lobo N.F."/>
            <person name="Campbell K.S."/>
            <person name="Brown S.E."/>
            <person name="Bonaldo M.F."/>
            <person name="Zhu J."/>
            <person name="Sinkins S.P."/>
            <person name="Hogenkamp D.G."/>
            <person name="Amedeo P."/>
            <person name="Arensburger P."/>
            <person name="Atkinson P.W."/>
            <person name="Bidwell S.L."/>
            <person name="Biedler J."/>
            <person name="Birney E."/>
            <person name="Bruggner R.V."/>
            <person name="Costas J."/>
            <person name="Coy M.R."/>
            <person name="Crabtree J."/>
            <person name="Crawford M."/>
            <person name="DeBruyn B."/>
            <person name="DeCaprio D."/>
            <person name="Eiglmeier K."/>
            <person name="Eisenstadt E."/>
            <person name="El-Dorry H."/>
            <person name="Gelbart W.M."/>
            <person name="Gomes S.L."/>
            <person name="Hammond M."/>
            <person name="Hannick L.I."/>
            <person name="Hogan J.R."/>
            <person name="Holmes M.H."/>
            <person name="Jaffe D."/>
            <person name="Johnston S.J."/>
            <person name="Kennedy R.C."/>
            <person name="Koo H."/>
            <person name="Kravitz S."/>
            <person name="Kriventseva E.V."/>
            <person name="Kulp D."/>
            <person name="Labutti K."/>
            <person name="Lee E."/>
            <person name="Li S."/>
            <person name="Lovin D.D."/>
            <person name="Mao C."/>
            <person name="Mauceli E."/>
            <person name="Menck C.F."/>
            <person name="Miller J.R."/>
            <person name="Montgomery P."/>
            <person name="Mori A."/>
            <person name="Nascimento A.L."/>
            <person name="Naveira H.F."/>
            <person name="Nusbaum C."/>
            <person name="O'Leary S.B."/>
            <person name="Orvis J."/>
            <person name="Pertea M."/>
            <person name="Quesneville H."/>
            <person name="Reidenbach K.R."/>
            <person name="Rogers Y.-H.C."/>
            <person name="Roth C.W."/>
            <person name="Schneider J.R."/>
            <person name="Schatz M."/>
            <person name="Shumway M."/>
            <person name="Stanke M."/>
            <person name="Stinson E.O."/>
            <person name="Tubio J.M.C."/>
            <person name="Vanzee J.P."/>
            <person name="Verjovski-Almeida S."/>
            <person name="Werner D."/>
            <person name="White O.R."/>
            <person name="Wyder S."/>
            <person name="Zeng Q."/>
            <person name="Zhao Q."/>
            <person name="Zhao Y."/>
            <person name="Hill C.A."/>
            <person name="Raikhel A.S."/>
            <person name="Soares M.B."/>
            <person name="Knudson D.L."/>
            <person name="Lee N.H."/>
            <person name="Galagan J."/>
            <person name="Salzberg S.L."/>
            <person name="Paulsen I.T."/>
            <person name="Dimopoulos G."/>
            <person name="Collins F.H."/>
            <person name="Bruce B."/>
            <person name="Fraser-Liggett C.M."/>
            <person name="Severson D.W."/>
        </authorList>
    </citation>
    <scope>NUCLEOTIDE SEQUENCE [LARGE SCALE GENOMIC DNA]</scope>
    <source>
        <strain>LVPib12</strain>
    </source>
</reference>
<feature type="chain" id="PRO_0000360077" description="Tryptophan 2,3-dioxygenase">
    <location>
        <begin position="1"/>
        <end position="393"/>
    </location>
</feature>
<feature type="binding site" evidence="1">
    <location>
        <begin position="56"/>
        <end position="60"/>
    </location>
    <ligand>
        <name>substrate</name>
    </ligand>
</feature>
<feature type="binding site" evidence="1">
    <location>
        <position position="127"/>
    </location>
    <ligand>
        <name>substrate</name>
    </ligand>
</feature>
<feature type="binding site" description="axial binding residue" evidence="1">
    <location>
        <position position="312"/>
    </location>
    <ligand>
        <name>heme</name>
        <dbReference type="ChEBI" id="CHEBI:30413"/>
    </ligand>
    <ligandPart>
        <name>Fe</name>
        <dbReference type="ChEBI" id="CHEBI:18248"/>
    </ligandPart>
</feature>
<feature type="binding site" evidence="1">
    <location>
        <position position="327"/>
    </location>
    <ligand>
        <name>substrate</name>
    </ligand>
</feature>
<feature type="sequence conflict" description="In Ref. 1; AAL37360." evidence="3" ref="1">
    <original>Q</original>
    <variation>R</variation>
    <location>
        <position position="293"/>
    </location>
</feature>
<keyword id="KW-0223">Dioxygenase</keyword>
<keyword id="KW-0349">Heme</keyword>
<keyword id="KW-0408">Iron</keyword>
<keyword id="KW-0479">Metal-binding</keyword>
<keyword id="KW-0560">Oxidoreductase</keyword>
<keyword id="KW-1185">Reference proteome</keyword>
<keyword id="KW-0823">Tryptophan catabolism</keyword>
<proteinExistence type="evidence at protein level"/>
<comment type="function">
    <text evidence="1 2">Heme-dependent dioxygenase that catalyzes the oxidative cleavage of the L-tryptophan (L-Trp) pyrrole ring and converts L-tryptophan to N-formyl-L-kynurenine. Catalyzes the oxidative cleavage of the indole moiety.</text>
</comment>
<comment type="catalytic activity">
    <reaction evidence="1 2">
        <text>L-tryptophan + O2 = N-formyl-L-kynurenine</text>
        <dbReference type="Rhea" id="RHEA:24536"/>
        <dbReference type="ChEBI" id="CHEBI:15379"/>
        <dbReference type="ChEBI" id="CHEBI:57912"/>
        <dbReference type="ChEBI" id="CHEBI:58629"/>
        <dbReference type="EC" id="1.13.11.11"/>
    </reaction>
</comment>
<comment type="cofactor">
    <cofactor evidence="1">
        <name>heme</name>
        <dbReference type="ChEBI" id="CHEBI:30413"/>
    </cofactor>
    <text evidence="1">Binds 1 heme group per subunit.</text>
</comment>
<comment type="activity regulation">
    <text evidence="2">Stimulated by low concentrations of hydrogen peroxide (5 uM), ascorbate (0.1-0.3 mM), and sodium hydrosulfite (0.1 mM). Inhibited by high concentrations of hydrogen peroxide (0.1 mM), ascorbate (10 mM), and sodium hydrosulfite (1 mM).</text>
</comment>
<comment type="biophysicochemical properties">
    <phDependence>
        <text evidence="2">Optimum pH is 8.0.</text>
    </phDependence>
    <temperatureDependence>
        <text evidence="2">Optimum temperature is 40 degrees Celsius.</text>
    </temperatureDependence>
</comment>
<comment type="pathway">
    <text evidence="1">Amino-acid degradation; L-tryptophan degradation via kynurenine pathway; L-kynurenine from L-tryptophan: step 1/2.</text>
</comment>
<comment type="pathway">
    <text evidence="1">Pigment biosynthesis; ommochrome biosynthesis.</text>
</comment>
<comment type="subunit">
    <text evidence="1">Homotetramer. Dimer of dimers.</text>
</comment>
<comment type="similarity">
    <text evidence="1">Belongs to the tryptophan 2,3-dioxygenase family.</text>
</comment>
<organism>
    <name type="scientific">Aedes aegypti</name>
    <name type="common">Yellowfever mosquito</name>
    <name type="synonym">Culex aegypti</name>
    <dbReference type="NCBI Taxonomy" id="7159"/>
    <lineage>
        <taxon>Eukaryota</taxon>
        <taxon>Metazoa</taxon>
        <taxon>Ecdysozoa</taxon>
        <taxon>Arthropoda</taxon>
        <taxon>Hexapoda</taxon>
        <taxon>Insecta</taxon>
        <taxon>Pterygota</taxon>
        <taxon>Neoptera</taxon>
        <taxon>Endopterygota</taxon>
        <taxon>Diptera</taxon>
        <taxon>Nematocera</taxon>
        <taxon>Culicoidea</taxon>
        <taxon>Culicidae</taxon>
        <taxon>Culicinae</taxon>
        <taxon>Aedini</taxon>
        <taxon>Aedes</taxon>
        <taxon>Stegomyia</taxon>
    </lineage>
</organism>